<proteinExistence type="evidence at transcript level"/>
<keyword id="KW-0408">Iron</keyword>
<keyword id="KW-0411">Iron-sulfur</keyword>
<keyword id="KW-0479">Metal-binding</keyword>
<keyword id="KW-1185">Reference proteome</keyword>
<organism>
    <name type="scientific">Gallus gallus</name>
    <name type="common">Chicken</name>
    <dbReference type="NCBI Taxonomy" id="9031"/>
    <lineage>
        <taxon>Eukaryota</taxon>
        <taxon>Metazoa</taxon>
        <taxon>Chordata</taxon>
        <taxon>Craniata</taxon>
        <taxon>Vertebrata</taxon>
        <taxon>Euteleostomi</taxon>
        <taxon>Archelosauria</taxon>
        <taxon>Archosauria</taxon>
        <taxon>Dinosauria</taxon>
        <taxon>Saurischia</taxon>
        <taxon>Theropoda</taxon>
        <taxon>Coelurosauria</taxon>
        <taxon>Aves</taxon>
        <taxon>Neognathae</taxon>
        <taxon>Galloanserae</taxon>
        <taxon>Galliformes</taxon>
        <taxon>Phasianidae</taxon>
        <taxon>Phasianinae</taxon>
        <taxon>Gallus</taxon>
    </lineage>
</organism>
<comment type="function">
    <text evidence="1">Required for the first step of diphthamide biosynthesis, a post-translational modification of histidine which occurs in elongation factor 2 (By similarity). DPH1 and DPH2 transfer a 3-amino-3-carboxypropyl (ACP) group from S-adenosyl-L-methionine (SAM) to a histidine residue, the reaction is assisted by a reduction system comprising DPH3 and a NADH-dependent reductase (By similarity). Facilitates the reduction of the catalytic iron-sulfur cluster found in the DPH1 subunit (By similarity).</text>
</comment>
<comment type="cofactor">
    <cofactor evidence="1">
        <name>[4Fe-4S] cluster</name>
        <dbReference type="ChEBI" id="CHEBI:49883"/>
    </cofactor>
    <text evidence="1">Binds 1 [4Fe-4S] cluster per subunit. The cluster facilitates the reduction of the catalytic iron-sulfur cluster in the DPH1 subunit.</text>
</comment>
<comment type="pathway">
    <text evidence="2">Protein modification; peptidyl-diphthamide biosynthesis.</text>
</comment>
<comment type="subunit">
    <text evidence="1">Component of the 2-(3-amino-3-carboxypropyl)histidine synthase complex composed of DPH1, DPH2, DPH3 and a NADH-dependent reductase.</text>
</comment>
<comment type="similarity">
    <text evidence="2">Belongs to the DPH1/DPH2 family. DPH2 subfamily.</text>
</comment>
<evidence type="ECO:0000250" key="1">
    <source>
        <dbReference type="UniProtKB" id="P32461"/>
    </source>
</evidence>
<evidence type="ECO:0000305" key="2"/>
<reference key="1">
    <citation type="journal article" date="2005" name="Genome Biol.">
        <title>Full-length cDNAs from chicken bursal lymphocytes to facilitate gene function analysis.</title>
        <authorList>
            <person name="Caldwell R.B."/>
            <person name="Kierzek A.M."/>
            <person name="Arakawa H."/>
            <person name="Bezzubov Y."/>
            <person name="Zaim J."/>
            <person name="Fiedler P."/>
            <person name="Kutter S."/>
            <person name="Blagodatski A."/>
            <person name="Kostovska D."/>
            <person name="Koter M."/>
            <person name="Plachy J."/>
            <person name="Carninci P."/>
            <person name="Hayashizaki Y."/>
            <person name="Buerstedde J.-M."/>
        </authorList>
    </citation>
    <scope>NUCLEOTIDE SEQUENCE [LARGE SCALE MRNA]</scope>
    <source>
        <strain>CB</strain>
        <tissue>Bursa of Fabricius</tissue>
    </source>
</reference>
<sequence length="477" mass="52163">MAAAFSSDGEAVLRRTLDPAAAAPRGDKDEFYEVDRAAAFVRDGGFRKVALQFPDALLADAAAVAARMEEVTGAEMYVLGDTTYGSCCVDEVAAEHVSAGAVVHYGPACLSPCRKLPVLHVFGRQPLDVGRCAEVFRELYPERQSRVVVLSDVVYAHAMGELEKQLCHEYPNIIFSEVVCGDAPSPTLPGEVRQFGRRFHMEAAEELQDCSMFYVGAEGLALTSFMLTWNRFPFSSFDPATGHGRRETLNVNRALMRRLYLVERARDAHVVGILVGTLGVAGYLDVLEHLHQLVRRAGKRSYTLSVGKPNPAKLANFLEVDIFVLVACAQNSLLDSSEFYRPIVTPYELELACNPAREWTGNYLTDFRDLLPGACAHIELPPAVPAAEAIPDVSLITGEMRATHLCDPLAPQPPSSTTLACRDQTRALAEMSPAATFLESRSWRGLEQQLGKTAVSKAVQGRRGIAIAYEDEGREQS</sequence>
<dbReference type="EMBL" id="AJ720102">
    <property type="protein sequence ID" value="CAG31761.1"/>
    <property type="molecule type" value="mRNA"/>
</dbReference>
<dbReference type="RefSeq" id="NP_001006538.1">
    <property type="nucleotide sequence ID" value="NM_001006538.1"/>
</dbReference>
<dbReference type="SMR" id="Q5ZKI2"/>
<dbReference type="FunCoup" id="Q5ZKI2">
    <property type="interactions" value="1548"/>
</dbReference>
<dbReference type="STRING" id="9031.ENSGALP00000071287"/>
<dbReference type="PaxDb" id="9031-ENSGALP00000016389"/>
<dbReference type="GeneID" id="424574"/>
<dbReference type="KEGG" id="gga:424574"/>
<dbReference type="CTD" id="1802"/>
<dbReference type="VEuPathDB" id="HostDB:geneid_424574"/>
<dbReference type="eggNOG" id="KOG2648">
    <property type="taxonomic scope" value="Eukaryota"/>
</dbReference>
<dbReference type="InParanoid" id="Q5ZKI2"/>
<dbReference type="OrthoDB" id="449241at2759"/>
<dbReference type="PhylomeDB" id="Q5ZKI2"/>
<dbReference type="UniPathway" id="UPA00559"/>
<dbReference type="PRO" id="PR:Q5ZKI2"/>
<dbReference type="Proteomes" id="UP000000539">
    <property type="component" value="Unassembled WGS sequence"/>
</dbReference>
<dbReference type="GO" id="GO:0120513">
    <property type="term" value="C:2-(3-amino-3-carboxypropyl)histidine synthase complex"/>
    <property type="evidence" value="ECO:0000250"/>
    <property type="project" value="UniProtKB"/>
</dbReference>
<dbReference type="GO" id="GO:0090560">
    <property type="term" value="F:2-(3-amino-3-carboxypropyl)histidine synthase activity"/>
    <property type="evidence" value="ECO:0007669"/>
    <property type="project" value="UniProtKB-EC"/>
</dbReference>
<dbReference type="GO" id="GO:0051539">
    <property type="term" value="F:4 iron, 4 sulfur cluster binding"/>
    <property type="evidence" value="ECO:0000250"/>
    <property type="project" value="UniProtKB"/>
</dbReference>
<dbReference type="GO" id="GO:0046872">
    <property type="term" value="F:metal ion binding"/>
    <property type="evidence" value="ECO:0007669"/>
    <property type="project" value="UniProtKB-KW"/>
</dbReference>
<dbReference type="GO" id="GO:0017183">
    <property type="term" value="P:protein histidyl modification to diphthamide"/>
    <property type="evidence" value="ECO:0000250"/>
    <property type="project" value="UniProtKB"/>
</dbReference>
<dbReference type="FunFam" id="3.40.50.11840:FF:000002">
    <property type="entry name" value="2-(3-amino-3-carboxypropyl)histidine synthase subunit 2"/>
    <property type="match status" value="1"/>
</dbReference>
<dbReference type="FunFam" id="3.40.50.11860:FF:000001">
    <property type="entry name" value="2-(3-amino-3-carboxypropyl)histidine synthase subunit 2"/>
    <property type="match status" value="1"/>
</dbReference>
<dbReference type="Gene3D" id="3.40.50.11840">
    <property type="entry name" value="Diphthamide synthesis DPH1/DPH2 domain 1"/>
    <property type="match status" value="1"/>
</dbReference>
<dbReference type="Gene3D" id="3.40.50.11860">
    <property type="entry name" value="Diphthamide synthesis DPH1/DPH2 domain 3"/>
    <property type="match status" value="1"/>
</dbReference>
<dbReference type="InterPro" id="IPR010014">
    <property type="entry name" value="DHP2"/>
</dbReference>
<dbReference type="InterPro" id="IPR016435">
    <property type="entry name" value="DPH1/DPH2"/>
</dbReference>
<dbReference type="InterPro" id="IPR042263">
    <property type="entry name" value="DPH1/DPH2_1"/>
</dbReference>
<dbReference type="InterPro" id="IPR042265">
    <property type="entry name" value="DPH1/DPH2_3"/>
</dbReference>
<dbReference type="NCBIfam" id="TIGR00322">
    <property type="entry name" value="diphth2_R"/>
    <property type="match status" value="1"/>
</dbReference>
<dbReference type="NCBIfam" id="TIGR00272">
    <property type="entry name" value="DPH2"/>
    <property type="match status" value="1"/>
</dbReference>
<dbReference type="PANTHER" id="PTHR10762:SF2">
    <property type="entry name" value="2-(3-AMINO-3-CARBOXYPROPYL)HISTIDINE SYNTHASE SUBUNIT 2"/>
    <property type="match status" value="1"/>
</dbReference>
<dbReference type="PANTHER" id="PTHR10762">
    <property type="entry name" value="DIPHTHAMIDE BIOSYNTHESIS PROTEIN"/>
    <property type="match status" value="1"/>
</dbReference>
<dbReference type="Pfam" id="PF01866">
    <property type="entry name" value="Diphthamide_syn"/>
    <property type="match status" value="1"/>
</dbReference>
<dbReference type="SFLD" id="SFLDG01121">
    <property type="entry name" value="Diphthamide_biosynthesis"/>
    <property type="match status" value="1"/>
</dbReference>
<dbReference type="SFLD" id="SFLDF00408">
    <property type="entry name" value="Diphthamide_biosynthesis_famil"/>
    <property type="match status" value="1"/>
</dbReference>
<dbReference type="SFLD" id="SFLDS00032">
    <property type="entry name" value="Radical_SAM_3-amino-3-carboxyp"/>
    <property type="match status" value="1"/>
</dbReference>
<feature type="chain" id="PRO_0000307893" description="2-(3-amino-3-carboxypropyl)histidine synthase subunit 2">
    <location>
        <begin position="1"/>
        <end position="477"/>
    </location>
</feature>
<feature type="binding site" evidence="1">
    <location>
        <position position="88"/>
    </location>
    <ligand>
        <name>[4Fe-4S] cluster</name>
        <dbReference type="ChEBI" id="CHEBI:49883"/>
    </ligand>
</feature>
<feature type="binding site" evidence="1">
    <location>
        <position position="109"/>
    </location>
    <ligand>
        <name>[4Fe-4S] cluster</name>
        <dbReference type="ChEBI" id="CHEBI:49883"/>
    </ligand>
</feature>
<feature type="binding site" evidence="1">
    <location>
        <position position="328"/>
    </location>
    <ligand>
        <name>[4Fe-4S] cluster</name>
        <dbReference type="ChEBI" id="CHEBI:49883"/>
    </ligand>
</feature>
<gene>
    <name type="primary">DPH2</name>
    <name type="ORF">RCJMB04_10j16</name>
</gene>
<protein>
    <recommendedName>
        <fullName evidence="2">2-(3-amino-3-carboxypropyl)histidine synthase subunit 2</fullName>
    </recommendedName>
    <alternativeName>
        <fullName>Diphthamide biosynthesis protein 2</fullName>
    </alternativeName>
    <alternativeName>
        <fullName evidence="2">Diphtheria toxin resistance protein 2</fullName>
    </alternativeName>
    <alternativeName>
        <fullName evidence="2">S-adenosyl-L-methionine:L-histidine 3-amino-3-carboxypropyltransferase 2</fullName>
    </alternativeName>
</protein>
<accession>Q5ZKI2</accession>
<name>DPH2_CHICK</name>